<feature type="chain" id="PRO_0000242412" description="Large ribosomal subunit protein uL4">
    <location>
        <begin position="1"/>
        <end position="210"/>
    </location>
</feature>
<feature type="region of interest" description="Disordered" evidence="2">
    <location>
        <begin position="46"/>
        <end position="89"/>
    </location>
</feature>
<feature type="compositionally biased region" description="Basic residues" evidence="2">
    <location>
        <begin position="60"/>
        <end position="71"/>
    </location>
</feature>
<evidence type="ECO:0000255" key="1">
    <source>
        <dbReference type="HAMAP-Rule" id="MF_01328"/>
    </source>
</evidence>
<evidence type="ECO:0000256" key="2">
    <source>
        <dbReference type="SAM" id="MobiDB-lite"/>
    </source>
</evidence>
<evidence type="ECO:0000305" key="3"/>
<accession>Q318I5</accession>
<sequence>MTTIETLKWDGKKSGEVKLDLTVAKETSSADLIHRAVLRQLANKRQGTASTLTRSEVRGGGRKPYKQKGTGRARQGSIRTPLRPGGGIIFGPKPRSYNLDMNRKERRLALRTALMSRISDVKAVEDFGSTLKQPKTSDIINGLTRLGIQKTEKVLVILDSPSEVIKKSINNIEKVKLIAADQLNVFDILNANKLVIGQSAINKIKEVYAS</sequence>
<gene>
    <name evidence="1" type="primary">rplD</name>
    <name evidence="1" type="synonym">rpl4</name>
    <name type="ordered locus">PMT9312_1649</name>
</gene>
<keyword id="KW-0687">Ribonucleoprotein</keyword>
<keyword id="KW-0689">Ribosomal protein</keyword>
<keyword id="KW-0694">RNA-binding</keyword>
<keyword id="KW-0699">rRNA-binding</keyword>
<dbReference type="EMBL" id="CP000111">
    <property type="protein sequence ID" value="ABB50710.1"/>
    <property type="molecule type" value="Genomic_DNA"/>
</dbReference>
<dbReference type="RefSeq" id="WP_011377191.1">
    <property type="nucleotide sequence ID" value="NC_007577.1"/>
</dbReference>
<dbReference type="SMR" id="Q318I5"/>
<dbReference type="STRING" id="74546.PMT9312_1649"/>
<dbReference type="KEGG" id="pmi:PMT9312_1649"/>
<dbReference type="eggNOG" id="COG0088">
    <property type="taxonomic scope" value="Bacteria"/>
</dbReference>
<dbReference type="HOGENOM" id="CLU_041575_5_2_3"/>
<dbReference type="OrthoDB" id="9803201at2"/>
<dbReference type="Proteomes" id="UP000002715">
    <property type="component" value="Chromosome"/>
</dbReference>
<dbReference type="GO" id="GO:1990904">
    <property type="term" value="C:ribonucleoprotein complex"/>
    <property type="evidence" value="ECO:0007669"/>
    <property type="project" value="UniProtKB-KW"/>
</dbReference>
<dbReference type="GO" id="GO:0005840">
    <property type="term" value="C:ribosome"/>
    <property type="evidence" value="ECO:0007669"/>
    <property type="project" value="UniProtKB-KW"/>
</dbReference>
<dbReference type="GO" id="GO:0019843">
    <property type="term" value="F:rRNA binding"/>
    <property type="evidence" value="ECO:0007669"/>
    <property type="project" value="UniProtKB-UniRule"/>
</dbReference>
<dbReference type="GO" id="GO:0003735">
    <property type="term" value="F:structural constituent of ribosome"/>
    <property type="evidence" value="ECO:0007669"/>
    <property type="project" value="InterPro"/>
</dbReference>
<dbReference type="GO" id="GO:0006412">
    <property type="term" value="P:translation"/>
    <property type="evidence" value="ECO:0007669"/>
    <property type="project" value="UniProtKB-UniRule"/>
</dbReference>
<dbReference type="Gene3D" id="3.40.1370.10">
    <property type="match status" value="1"/>
</dbReference>
<dbReference type="HAMAP" id="MF_01328_B">
    <property type="entry name" value="Ribosomal_uL4_B"/>
    <property type="match status" value="1"/>
</dbReference>
<dbReference type="InterPro" id="IPR002136">
    <property type="entry name" value="Ribosomal_uL4"/>
</dbReference>
<dbReference type="InterPro" id="IPR013005">
    <property type="entry name" value="Ribosomal_uL4-like"/>
</dbReference>
<dbReference type="InterPro" id="IPR023574">
    <property type="entry name" value="Ribosomal_uL4_dom_sf"/>
</dbReference>
<dbReference type="NCBIfam" id="TIGR03953">
    <property type="entry name" value="rplD_bact"/>
    <property type="match status" value="1"/>
</dbReference>
<dbReference type="PANTHER" id="PTHR10746">
    <property type="entry name" value="50S RIBOSOMAL PROTEIN L4"/>
    <property type="match status" value="1"/>
</dbReference>
<dbReference type="PANTHER" id="PTHR10746:SF17">
    <property type="entry name" value="LARGE RIBOSOMAL SUBUNIT PROTEIN UL4C"/>
    <property type="match status" value="1"/>
</dbReference>
<dbReference type="Pfam" id="PF00573">
    <property type="entry name" value="Ribosomal_L4"/>
    <property type="match status" value="1"/>
</dbReference>
<dbReference type="SUPFAM" id="SSF52166">
    <property type="entry name" value="Ribosomal protein L4"/>
    <property type="match status" value="1"/>
</dbReference>
<name>RL4_PROM9</name>
<comment type="function">
    <text evidence="1">One of the primary rRNA binding proteins, this protein initially binds near the 5'-end of the 23S rRNA. It is important during the early stages of 50S assembly. It makes multiple contacts with different domains of the 23S rRNA in the assembled 50S subunit and ribosome.</text>
</comment>
<comment type="function">
    <text evidence="1">Forms part of the polypeptide exit tunnel.</text>
</comment>
<comment type="subunit">
    <text evidence="1">Part of the 50S ribosomal subunit.</text>
</comment>
<comment type="similarity">
    <text evidence="1">Belongs to the universal ribosomal protein uL4 family.</text>
</comment>
<proteinExistence type="inferred from homology"/>
<reference key="1">
    <citation type="journal article" date="2006" name="Science">
        <title>Genomic islands and the ecology and evolution of Prochlorococcus.</title>
        <authorList>
            <person name="Coleman M.L."/>
            <person name="Sullivan M.B."/>
            <person name="Martiny A.C."/>
            <person name="Steglich C."/>
            <person name="Barry K."/>
            <person name="Delong E.F."/>
            <person name="Chisholm S.W."/>
        </authorList>
    </citation>
    <scope>NUCLEOTIDE SEQUENCE [LARGE SCALE GENOMIC DNA]</scope>
    <source>
        <strain>MIT 9312</strain>
    </source>
</reference>
<protein>
    <recommendedName>
        <fullName evidence="1">Large ribosomal subunit protein uL4</fullName>
    </recommendedName>
    <alternativeName>
        <fullName evidence="3">50S ribosomal protein L4</fullName>
    </alternativeName>
</protein>
<organism>
    <name type="scientific">Prochlorococcus marinus (strain MIT 9312)</name>
    <dbReference type="NCBI Taxonomy" id="74546"/>
    <lineage>
        <taxon>Bacteria</taxon>
        <taxon>Bacillati</taxon>
        <taxon>Cyanobacteriota</taxon>
        <taxon>Cyanophyceae</taxon>
        <taxon>Synechococcales</taxon>
        <taxon>Prochlorococcaceae</taxon>
        <taxon>Prochlorococcus</taxon>
    </lineage>
</organism>